<reference key="1">
    <citation type="journal article" date="2010" name="PLoS ONE">
        <title>The complete multipartite genome sequence of Cupriavidus necator JMP134, a versatile pollutant degrader.</title>
        <authorList>
            <person name="Lykidis A."/>
            <person name="Perez-Pantoja D."/>
            <person name="Ledger T."/>
            <person name="Mavromatis K."/>
            <person name="Anderson I.J."/>
            <person name="Ivanova N.N."/>
            <person name="Hooper S.D."/>
            <person name="Lapidus A."/>
            <person name="Lucas S."/>
            <person name="Gonzalez B."/>
            <person name="Kyrpides N.C."/>
        </authorList>
    </citation>
    <scope>NUCLEOTIDE SEQUENCE [LARGE SCALE GENOMIC DNA]</scope>
    <source>
        <strain>JMP134 / LMG 1197</strain>
    </source>
</reference>
<evidence type="ECO:0000255" key="1">
    <source>
        <dbReference type="HAMAP-Rule" id="MF_00022"/>
    </source>
</evidence>
<organism>
    <name type="scientific">Cupriavidus pinatubonensis (strain JMP 134 / LMG 1197)</name>
    <name type="common">Cupriavidus necator (strain JMP 134)</name>
    <dbReference type="NCBI Taxonomy" id="264198"/>
    <lineage>
        <taxon>Bacteria</taxon>
        <taxon>Pseudomonadati</taxon>
        <taxon>Pseudomonadota</taxon>
        <taxon>Betaproteobacteria</taxon>
        <taxon>Burkholderiales</taxon>
        <taxon>Burkholderiaceae</taxon>
        <taxon>Cupriavidus</taxon>
    </lineage>
</organism>
<sequence>MTQRVRTRFAPSPTGFIHLGNIRSALYPWAFARRMKGDFVLRIEDTDVERSSQEAVDVILEGMAWLGLDIDEGPFYQMQRMDRYREVLAQMVDSGLAYPCYMSTEELDALREAQRERGEKPRYNGFWRPEPGKVLPQPPAGVKPVLRFRNPLDGSVVWDDAVKGRIEISNEELDDLVIARPDGTPTYNFCVVVDDLDMKITHVIRGDDHVNNTPRQINIIRALGGTQPVYAHLPTVLNESGEKMSKRHGAMSVTGYRDEGYLPEAVVNYLARLGWAHGDAEIFSREQFVEWFDLEHLGKSPAQYNPEKLAWLNNHYIKVGDNARLAELTRPFIEALGGKVEGADLVGVIALVKDRANTLKDVAQTALLFYRGEPQADAALKAEHLTPEIQPALKALATQLGALPEWKREAISATFKAVLAEFGLKMPKLAMPVRLLVAGQLQTPSIDAVLELFGREAVLRRIGAGVEA</sequence>
<feature type="chain" id="PRO_0000237393" description="Glutamate--tRNA ligase">
    <location>
        <begin position="1"/>
        <end position="468"/>
    </location>
</feature>
<feature type="short sequence motif" description="'HIGH' region" evidence="1">
    <location>
        <begin position="11"/>
        <end position="21"/>
    </location>
</feature>
<feature type="short sequence motif" description="'KMSKS' region" evidence="1">
    <location>
        <begin position="243"/>
        <end position="247"/>
    </location>
</feature>
<feature type="binding site" evidence="1">
    <location>
        <position position="246"/>
    </location>
    <ligand>
        <name>ATP</name>
        <dbReference type="ChEBI" id="CHEBI:30616"/>
    </ligand>
</feature>
<name>SYE_CUPPJ</name>
<dbReference type="EC" id="6.1.1.17" evidence="1"/>
<dbReference type="EMBL" id="CP000090">
    <property type="protein sequence ID" value="AAZ61487.1"/>
    <property type="molecule type" value="Genomic_DNA"/>
</dbReference>
<dbReference type="SMR" id="Q46ZE6"/>
<dbReference type="STRING" id="264198.Reut_A2123"/>
<dbReference type="KEGG" id="reu:Reut_A2123"/>
<dbReference type="eggNOG" id="COG0008">
    <property type="taxonomic scope" value="Bacteria"/>
</dbReference>
<dbReference type="HOGENOM" id="CLU_015768_6_1_4"/>
<dbReference type="OrthoDB" id="9807503at2"/>
<dbReference type="GO" id="GO:0005829">
    <property type="term" value="C:cytosol"/>
    <property type="evidence" value="ECO:0007669"/>
    <property type="project" value="TreeGrafter"/>
</dbReference>
<dbReference type="GO" id="GO:0005524">
    <property type="term" value="F:ATP binding"/>
    <property type="evidence" value="ECO:0007669"/>
    <property type="project" value="UniProtKB-UniRule"/>
</dbReference>
<dbReference type="GO" id="GO:0004818">
    <property type="term" value="F:glutamate-tRNA ligase activity"/>
    <property type="evidence" value="ECO:0007669"/>
    <property type="project" value="UniProtKB-UniRule"/>
</dbReference>
<dbReference type="GO" id="GO:0000049">
    <property type="term" value="F:tRNA binding"/>
    <property type="evidence" value="ECO:0007669"/>
    <property type="project" value="InterPro"/>
</dbReference>
<dbReference type="GO" id="GO:0008270">
    <property type="term" value="F:zinc ion binding"/>
    <property type="evidence" value="ECO:0007669"/>
    <property type="project" value="InterPro"/>
</dbReference>
<dbReference type="GO" id="GO:0006424">
    <property type="term" value="P:glutamyl-tRNA aminoacylation"/>
    <property type="evidence" value="ECO:0007669"/>
    <property type="project" value="UniProtKB-UniRule"/>
</dbReference>
<dbReference type="CDD" id="cd00808">
    <property type="entry name" value="GluRS_core"/>
    <property type="match status" value="1"/>
</dbReference>
<dbReference type="FunFam" id="3.40.50.620:FF:000007">
    <property type="entry name" value="Glutamate--tRNA ligase"/>
    <property type="match status" value="1"/>
</dbReference>
<dbReference type="Gene3D" id="1.10.10.350">
    <property type="match status" value="1"/>
</dbReference>
<dbReference type="Gene3D" id="3.40.50.620">
    <property type="entry name" value="HUPs"/>
    <property type="match status" value="1"/>
</dbReference>
<dbReference type="HAMAP" id="MF_00022">
    <property type="entry name" value="Glu_tRNA_synth_type1"/>
    <property type="match status" value="1"/>
</dbReference>
<dbReference type="InterPro" id="IPR045462">
    <property type="entry name" value="aa-tRNA-synth_I_cd-bd"/>
</dbReference>
<dbReference type="InterPro" id="IPR020751">
    <property type="entry name" value="aa-tRNA-synth_I_codon-bd_sub2"/>
</dbReference>
<dbReference type="InterPro" id="IPR001412">
    <property type="entry name" value="aa-tRNA-synth_I_CS"/>
</dbReference>
<dbReference type="InterPro" id="IPR008925">
    <property type="entry name" value="aa_tRNA-synth_I_cd-bd_sf"/>
</dbReference>
<dbReference type="InterPro" id="IPR004527">
    <property type="entry name" value="Glu-tRNA-ligase_bac/mito"/>
</dbReference>
<dbReference type="InterPro" id="IPR000924">
    <property type="entry name" value="Glu/Gln-tRNA-synth"/>
</dbReference>
<dbReference type="InterPro" id="IPR020058">
    <property type="entry name" value="Glu/Gln-tRNA-synth_Ib_cat-dom"/>
</dbReference>
<dbReference type="InterPro" id="IPR049940">
    <property type="entry name" value="GluQ/Sye"/>
</dbReference>
<dbReference type="InterPro" id="IPR033910">
    <property type="entry name" value="GluRS_core"/>
</dbReference>
<dbReference type="InterPro" id="IPR014729">
    <property type="entry name" value="Rossmann-like_a/b/a_fold"/>
</dbReference>
<dbReference type="NCBIfam" id="TIGR00464">
    <property type="entry name" value="gltX_bact"/>
    <property type="match status" value="1"/>
</dbReference>
<dbReference type="PANTHER" id="PTHR43311">
    <property type="entry name" value="GLUTAMATE--TRNA LIGASE"/>
    <property type="match status" value="1"/>
</dbReference>
<dbReference type="PANTHER" id="PTHR43311:SF2">
    <property type="entry name" value="GLUTAMATE--TRNA LIGASE, MITOCHONDRIAL-RELATED"/>
    <property type="match status" value="1"/>
</dbReference>
<dbReference type="Pfam" id="PF19269">
    <property type="entry name" value="Anticodon_2"/>
    <property type="match status" value="1"/>
</dbReference>
<dbReference type="Pfam" id="PF00749">
    <property type="entry name" value="tRNA-synt_1c"/>
    <property type="match status" value="1"/>
</dbReference>
<dbReference type="PRINTS" id="PR00987">
    <property type="entry name" value="TRNASYNTHGLU"/>
</dbReference>
<dbReference type="SUPFAM" id="SSF48163">
    <property type="entry name" value="An anticodon-binding domain of class I aminoacyl-tRNA synthetases"/>
    <property type="match status" value="1"/>
</dbReference>
<dbReference type="SUPFAM" id="SSF52374">
    <property type="entry name" value="Nucleotidylyl transferase"/>
    <property type="match status" value="1"/>
</dbReference>
<dbReference type="PROSITE" id="PS00178">
    <property type="entry name" value="AA_TRNA_LIGASE_I"/>
    <property type="match status" value="1"/>
</dbReference>
<keyword id="KW-0030">Aminoacyl-tRNA synthetase</keyword>
<keyword id="KW-0067">ATP-binding</keyword>
<keyword id="KW-0963">Cytoplasm</keyword>
<keyword id="KW-0436">Ligase</keyword>
<keyword id="KW-0547">Nucleotide-binding</keyword>
<keyword id="KW-0648">Protein biosynthesis</keyword>
<comment type="function">
    <text evidence="1">Catalyzes the attachment of glutamate to tRNA(Glu) in a two-step reaction: glutamate is first activated by ATP to form Glu-AMP and then transferred to the acceptor end of tRNA(Glu).</text>
</comment>
<comment type="catalytic activity">
    <reaction evidence="1">
        <text>tRNA(Glu) + L-glutamate + ATP = L-glutamyl-tRNA(Glu) + AMP + diphosphate</text>
        <dbReference type="Rhea" id="RHEA:23540"/>
        <dbReference type="Rhea" id="RHEA-COMP:9663"/>
        <dbReference type="Rhea" id="RHEA-COMP:9680"/>
        <dbReference type="ChEBI" id="CHEBI:29985"/>
        <dbReference type="ChEBI" id="CHEBI:30616"/>
        <dbReference type="ChEBI" id="CHEBI:33019"/>
        <dbReference type="ChEBI" id="CHEBI:78442"/>
        <dbReference type="ChEBI" id="CHEBI:78520"/>
        <dbReference type="ChEBI" id="CHEBI:456215"/>
        <dbReference type="EC" id="6.1.1.17"/>
    </reaction>
</comment>
<comment type="subunit">
    <text evidence="1">Monomer.</text>
</comment>
<comment type="subcellular location">
    <subcellularLocation>
        <location evidence="1">Cytoplasm</location>
    </subcellularLocation>
</comment>
<comment type="similarity">
    <text evidence="1">Belongs to the class-I aminoacyl-tRNA synthetase family. Glutamate--tRNA ligase type 1 subfamily.</text>
</comment>
<protein>
    <recommendedName>
        <fullName evidence="1">Glutamate--tRNA ligase</fullName>
        <ecNumber evidence="1">6.1.1.17</ecNumber>
    </recommendedName>
    <alternativeName>
        <fullName evidence="1">Glutamyl-tRNA synthetase</fullName>
        <shortName evidence="1">GluRS</shortName>
    </alternativeName>
</protein>
<proteinExistence type="inferred from homology"/>
<accession>Q46ZE6</accession>
<gene>
    <name evidence="1" type="primary">gltX</name>
    <name type="ordered locus">Reut_A2123</name>
</gene>